<comment type="function">
    <text evidence="1">Catalyzes the reversible conversion of ribose-5-phosphate to ribulose 5-phosphate.</text>
</comment>
<comment type="catalytic activity">
    <reaction evidence="1">
        <text>aldehydo-D-ribose 5-phosphate = D-ribulose 5-phosphate</text>
        <dbReference type="Rhea" id="RHEA:14657"/>
        <dbReference type="ChEBI" id="CHEBI:58121"/>
        <dbReference type="ChEBI" id="CHEBI:58273"/>
        <dbReference type="EC" id="5.3.1.6"/>
    </reaction>
</comment>
<comment type="pathway">
    <text evidence="1">Carbohydrate degradation; pentose phosphate pathway; D-ribose 5-phosphate from D-ribulose 5-phosphate (non-oxidative stage): step 1/1.</text>
</comment>
<comment type="subunit">
    <text evidence="1">Homodimer.</text>
</comment>
<comment type="similarity">
    <text evidence="1">Belongs to the ribose 5-phosphate isomerase family.</text>
</comment>
<keyword id="KW-0413">Isomerase</keyword>
<organism>
    <name type="scientific">Methylorubrum extorquens (strain CM4 / NCIMB 13688)</name>
    <name type="common">Methylobacterium extorquens</name>
    <dbReference type="NCBI Taxonomy" id="440085"/>
    <lineage>
        <taxon>Bacteria</taxon>
        <taxon>Pseudomonadati</taxon>
        <taxon>Pseudomonadota</taxon>
        <taxon>Alphaproteobacteria</taxon>
        <taxon>Hyphomicrobiales</taxon>
        <taxon>Methylobacteriaceae</taxon>
        <taxon>Methylorubrum</taxon>
    </lineage>
</organism>
<name>RPIA_METC4</name>
<accession>B7L2C9</accession>
<evidence type="ECO:0000255" key="1">
    <source>
        <dbReference type="HAMAP-Rule" id="MF_00170"/>
    </source>
</evidence>
<feature type="chain" id="PRO_1000194713" description="Ribose-5-phosphate isomerase A">
    <location>
        <begin position="1"/>
        <end position="236"/>
    </location>
</feature>
<feature type="active site" description="Proton acceptor" evidence="1">
    <location>
        <position position="105"/>
    </location>
</feature>
<feature type="binding site" evidence="1">
    <location>
        <begin position="28"/>
        <end position="31"/>
    </location>
    <ligand>
        <name>substrate</name>
    </ligand>
</feature>
<feature type="binding site" evidence="1">
    <location>
        <begin position="83"/>
        <end position="86"/>
    </location>
    <ligand>
        <name>substrate</name>
    </ligand>
</feature>
<feature type="binding site" evidence="1">
    <location>
        <begin position="96"/>
        <end position="99"/>
    </location>
    <ligand>
        <name>substrate</name>
    </ligand>
</feature>
<feature type="binding site" evidence="1">
    <location>
        <position position="123"/>
    </location>
    <ligand>
        <name>substrate</name>
    </ligand>
</feature>
<sequence>MSAPDLKRAAAERAIPLVEDGMRLGIGTGSTAAAFIKLLGERVRAGLKVTGVPTSEATRIACEREGIPLATLEDLPELDLTIDGADEVDGSLRLIKGGGAALLREKIVAVASRRMVVIADASKHVETLGAFPLPVEVNLFGIGATTRAVEAAVARAGCTGEIVRRHEASGAPLLTDGGHAILDLRLGRIPDPEALSAGLWAVPGVVEHGLFLGIADAAILAAAEGDTAVVSVLGRL</sequence>
<dbReference type="EC" id="5.3.1.6" evidence="1"/>
<dbReference type="EMBL" id="CP001298">
    <property type="protein sequence ID" value="ACK83414.1"/>
    <property type="molecule type" value="Genomic_DNA"/>
</dbReference>
<dbReference type="RefSeq" id="WP_015950947.1">
    <property type="nucleotide sequence ID" value="NC_011757.1"/>
</dbReference>
<dbReference type="SMR" id="B7L2C9"/>
<dbReference type="KEGG" id="mch:Mchl_2573"/>
<dbReference type="HOGENOM" id="CLU_056590_1_0_5"/>
<dbReference type="UniPathway" id="UPA00115">
    <property type="reaction ID" value="UER00412"/>
</dbReference>
<dbReference type="Proteomes" id="UP000002385">
    <property type="component" value="Chromosome"/>
</dbReference>
<dbReference type="GO" id="GO:0004751">
    <property type="term" value="F:ribose-5-phosphate isomerase activity"/>
    <property type="evidence" value="ECO:0007669"/>
    <property type="project" value="UniProtKB-UniRule"/>
</dbReference>
<dbReference type="GO" id="GO:0009052">
    <property type="term" value="P:pentose-phosphate shunt, non-oxidative branch"/>
    <property type="evidence" value="ECO:0007669"/>
    <property type="project" value="UniProtKB-UniRule"/>
</dbReference>
<dbReference type="CDD" id="cd01398">
    <property type="entry name" value="RPI_A"/>
    <property type="match status" value="1"/>
</dbReference>
<dbReference type="FunFam" id="3.40.50.1360:FF:000001">
    <property type="entry name" value="Ribose-5-phosphate isomerase A"/>
    <property type="match status" value="1"/>
</dbReference>
<dbReference type="Gene3D" id="3.30.70.260">
    <property type="match status" value="1"/>
</dbReference>
<dbReference type="Gene3D" id="3.40.50.1360">
    <property type="match status" value="1"/>
</dbReference>
<dbReference type="HAMAP" id="MF_00170">
    <property type="entry name" value="Rib_5P_isom_A"/>
    <property type="match status" value="1"/>
</dbReference>
<dbReference type="InterPro" id="IPR037171">
    <property type="entry name" value="NagB/RpiA_transferase-like"/>
</dbReference>
<dbReference type="InterPro" id="IPR050262">
    <property type="entry name" value="Ribose-5P_isomerase"/>
</dbReference>
<dbReference type="InterPro" id="IPR020672">
    <property type="entry name" value="Ribose5P_isomerase_typA_subgr"/>
</dbReference>
<dbReference type="InterPro" id="IPR004788">
    <property type="entry name" value="Ribose5P_isomerase_type_A"/>
</dbReference>
<dbReference type="NCBIfam" id="NF001924">
    <property type="entry name" value="PRK00702.1"/>
    <property type="match status" value="1"/>
</dbReference>
<dbReference type="NCBIfam" id="TIGR00021">
    <property type="entry name" value="rpiA"/>
    <property type="match status" value="1"/>
</dbReference>
<dbReference type="PANTHER" id="PTHR43748">
    <property type="entry name" value="RIBOSE-5-PHOSPHATE ISOMERASE 3, CHLOROPLASTIC-RELATED"/>
    <property type="match status" value="1"/>
</dbReference>
<dbReference type="PANTHER" id="PTHR43748:SF3">
    <property type="entry name" value="RIBOSE-5-PHOSPHATE ISOMERASE 3, CHLOROPLASTIC-RELATED"/>
    <property type="match status" value="1"/>
</dbReference>
<dbReference type="Pfam" id="PF06026">
    <property type="entry name" value="Rib_5-P_isom_A"/>
    <property type="match status" value="1"/>
</dbReference>
<dbReference type="SMART" id="SM01134">
    <property type="entry name" value="DeoRC"/>
    <property type="match status" value="1"/>
</dbReference>
<dbReference type="SUPFAM" id="SSF75445">
    <property type="entry name" value="D-ribose-5-phosphate isomerase (RpiA), lid domain"/>
    <property type="match status" value="1"/>
</dbReference>
<dbReference type="SUPFAM" id="SSF100950">
    <property type="entry name" value="NagB/RpiA/CoA transferase-like"/>
    <property type="match status" value="1"/>
</dbReference>
<proteinExistence type="inferred from homology"/>
<protein>
    <recommendedName>
        <fullName evidence="1">Ribose-5-phosphate isomerase A</fullName>
        <ecNumber evidence="1">5.3.1.6</ecNumber>
    </recommendedName>
    <alternativeName>
        <fullName evidence="1">Phosphoriboisomerase A</fullName>
        <shortName evidence="1">PRI</shortName>
    </alternativeName>
</protein>
<reference key="1">
    <citation type="submission" date="2008-12" db="EMBL/GenBank/DDBJ databases">
        <title>Complete sequence of chromosome of Methylobacterium chloromethanicum CM4.</title>
        <authorList>
            <consortium name="US DOE Joint Genome Institute"/>
            <person name="Lucas S."/>
            <person name="Copeland A."/>
            <person name="Lapidus A."/>
            <person name="Glavina del Rio T."/>
            <person name="Dalin E."/>
            <person name="Tice H."/>
            <person name="Bruce D."/>
            <person name="Goodwin L."/>
            <person name="Pitluck S."/>
            <person name="Chertkov O."/>
            <person name="Brettin T."/>
            <person name="Detter J.C."/>
            <person name="Han C."/>
            <person name="Larimer F."/>
            <person name="Land M."/>
            <person name="Hauser L."/>
            <person name="Kyrpides N."/>
            <person name="Mikhailova N."/>
            <person name="Marx C."/>
            <person name="Richardson P."/>
        </authorList>
    </citation>
    <scope>NUCLEOTIDE SEQUENCE [LARGE SCALE GENOMIC DNA]</scope>
    <source>
        <strain>CM4 / NCIMB 13688</strain>
    </source>
</reference>
<gene>
    <name evidence="1" type="primary">rpiA</name>
    <name type="ordered locus">Mchl_2573</name>
</gene>